<feature type="chain" id="PRO_0000407236" description="RNA-splicing ligase RtcB homolog">
    <location>
        <begin position="1"/>
        <end position="514"/>
    </location>
</feature>
<feature type="active site" description="GMP-histidine intermediate" evidence="1">
    <location>
        <position position="437"/>
    </location>
</feature>
<feature type="binding site" evidence="1">
    <location>
        <position position="128"/>
    </location>
    <ligand>
        <name>Mn(2+)</name>
        <dbReference type="ChEBI" id="CHEBI:29035"/>
        <label>1</label>
    </ligand>
</feature>
<feature type="binding site" evidence="1">
    <location>
        <position position="131"/>
    </location>
    <ligand>
        <name>Mn(2+)</name>
        <dbReference type="ChEBI" id="CHEBI:29035"/>
        <label>1</label>
    </ligand>
</feature>
<feature type="binding site" evidence="1">
    <location>
        <position position="131"/>
    </location>
    <ligand>
        <name>Mn(2+)</name>
        <dbReference type="ChEBI" id="CHEBI:29035"/>
        <label>2</label>
    </ligand>
</feature>
<feature type="binding site" evidence="1">
    <location>
        <begin position="235"/>
        <end position="239"/>
    </location>
    <ligand>
        <name>GMP</name>
        <dbReference type="ChEBI" id="CHEBI:58115"/>
    </ligand>
</feature>
<feature type="binding site" evidence="1">
    <location>
        <position position="236"/>
    </location>
    <ligand>
        <name>Mn(2+)</name>
        <dbReference type="ChEBI" id="CHEBI:29035"/>
        <label>1</label>
    </ligand>
</feature>
<feature type="binding site" evidence="1">
    <location>
        <position position="268"/>
    </location>
    <ligand>
        <name>Mn(2+)</name>
        <dbReference type="ChEBI" id="CHEBI:29035"/>
        <label>2</label>
    </ligand>
</feature>
<feature type="binding site" evidence="1">
    <location>
        <begin position="362"/>
        <end position="363"/>
    </location>
    <ligand>
        <name>GMP</name>
        <dbReference type="ChEBI" id="CHEBI:58115"/>
    </ligand>
</feature>
<feature type="binding site" evidence="1">
    <location>
        <position position="362"/>
    </location>
    <ligand>
        <name>Mn(2+)</name>
        <dbReference type="ChEBI" id="CHEBI:29035"/>
        <label>2</label>
    </ligand>
</feature>
<feature type="binding site" evidence="1">
    <location>
        <begin position="411"/>
        <end position="414"/>
    </location>
    <ligand>
        <name>GMP</name>
        <dbReference type="ChEBI" id="CHEBI:58115"/>
    </ligand>
</feature>
<feature type="binding site" evidence="1">
    <location>
        <position position="418"/>
    </location>
    <ligand>
        <name>GMP</name>
        <dbReference type="ChEBI" id="CHEBI:58115"/>
    </ligand>
</feature>
<feature type="binding site" evidence="1">
    <location>
        <begin position="437"/>
        <end position="440"/>
    </location>
    <ligand>
        <name>GMP</name>
        <dbReference type="ChEBI" id="CHEBI:58115"/>
    </ligand>
</feature>
<feature type="binding site" evidence="1">
    <location>
        <position position="513"/>
    </location>
    <ligand>
        <name>GMP</name>
        <dbReference type="ChEBI" id="CHEBI:58115"/>
    </ligand>
</feature>
<protein>
    <recommendedName>
        <fullName evidence="1">RNA-splicing ligase RtcB homolog</fullName>
        <ecNumber evidence="1">6.5.1.8</ecNumber>
    </recommendedName>
    <alternativeName>
        <fullName evidence="1">3'-phosphate/5'-hydroxy nucleic acid ligase</fullName>
    </alternativeName>
</protein>
<name>RTCB_OSTLU</name>
<sequence>MTTGADADARRTYDEERAYVSAVSPTKLVVAKGFVPNMRVPGEIYVNERLRELVLDELRAYCDEDRRGGGYSPAVKQIANVAALPGVVRASIALPDVHSGYGFAIGNVAAFDCGDDDAIVSPGGVGFDINCGVRLLRTNLTEAEVGPVKEALAQSLFDHIPVGVGSRGIIPTSPAALEAALEMGMDWSLREGYAWAEDKEHTEEYGRMLNADPSKVSARAKKRGLPQMGTLGAGNHYAEIQVVDEIYDEFAAKKMGIDRVGQICIMIHSGSRGLGHQVATDSLTAMERAMERDGIEVNDRQLACAKISSQEGQDYLAAMACAANYAWVNRSSMTFLCRQAFAKMFGKPPDELDMHVVYDVSHNIAKFEEHIVDGEMKTLLVHRKGSTRAFPPHHPLIPVDYQYTGQPVLIGGTMGTCSYILTGTEKGMRDTFGSTCHGAGRARSRNKSRHVLQYEDVLAKLKTKGIAIRVASPKLVMEEAPESYKDVTEVVNTCHDAGISKKCVKLRPIAVVKG</sequence>
<proteinExistence type="inferred from homology"/>
<organism>
    <name type="scientific">Ostreococcus lucimarinus (strain CCE9901)</name>
    <dbReference type="NCBI Taxonomy" id="436017"/>
    <lineage>
        <taxon>Eukaryota</taxon>
        <taxon>Viridiplantae</taxon>
        <taxon>Chlorophyta</taxon>
        <taxon>Mamiellophyceae</taxon>
        <taxon>Mamiellales</taxon>
        <taxon>Bathycoccaceae</taxon>
        <taxon>Ostreococcus</taxon>
    </lineage>
</organism>
<accession>A4S3S3</accession>
<comment type="function">
    <text evidence="1">Catalytic subunit of the tRNA-splicing ligase complex that acts by directly joining spliced tRNA halves to mature-sized tRNAs by incorporating the precursor-derived splice junction phosphate into the mature tRNA as a canonical 3',5'-phosphodiester. May act as an RNA ligase with broad substrate specificity, and may function toward other RNAs.</text>
</comment>
<comment type="catalytic activity">
    <reaction evidence="1">
        <text>a 3'-end 3'-phospho-ribonucleotide-RNA + a 5'-end dephospho-ribonucleoside-RNA + GTP = a ribonucleotidyl-ribonucleotide-RNA + GMP + diphosphate</text>
        <dbReference type="Rhea" id="RHEA:68076"/>
        <dbReference type="Rhea" id="RHEA-COMP:10463"/>
        <dbReference type="Rhea" id="RHEA-COMP:13936"/>
        <dbReference type="Rhea" id="RHEA-COMP:17355"/>
        <dbReference type="ChEBI" id="CHEBI:33019"/>
        <dbReference type="ChEBI" id="CHEBI:37565"/>
        <dbReference type="ChEBI" id="CHEBI:58115"/>
        <dbReference type="ChEBI" id="CHEBI:83062"/>
        <dbReference type="ChEBI" id="CHEBI:138284"/>
        <dbReference type="ChEBI" id="CHEBI:173118"/>
        <dbReference type="EC" id="6.5.1.8"/>
    </reaction>
</comment>
<comment type="catalytic activity">
    <reaction evidence="1">
        <text>a 3'-end 2',3'-cyclophospho-ribonucleotide-RNA + a 5'-end dephospho-ribonucleoside-RNA + GTP + H2O = a ribonucleotidyl-ribonucleotide-RNA + GMP + diphosphate + H(+)</text>
        <dbReference type="Rhea" id="RHEA:68080"/>
        <dbReference type="Rhea" id="RHEA-COMP:10464"/>
        <dbReference type="Rhea" id="RHEA-COMP:13936"/>
        <dbReference type="Rhea" id="RHEA-COMP:17355"/>
        <dbReference type="ChEBI" id="CHEBI:15377"/>
        <dbReference type="ChEBI" id="CHEBI:15378"/>
        <dbReference type="ChEBI" id="CHEBI:33019"/>
        <dbReference type="ChEBI" id="CHEBI:37565"/>
        <dbReference type="ChEBI" id="CHEBI:58115"/>
        <dbReference type="ChEBI" id="CHEBI:83064"/>
        <dbReference type="ChEBI" id="CHEBI:138284"/>
        <dbReference type="ChEBI" id="CHEBI:173118"/>
        <dbReference type="EC" id="6.5.1.8"/>
    </reaction>
</comment>
<comment type="cofactor">
    <cofactor evidence="1">
        <name>Mn(2+)</name>
        <dbReference type="ChEBI" id="CHEBI:29035"/>
    </cofactor>
    <text evidence="1">Binds 2 manganese ions per subunit.</text>
</comment>
<comment type="subunit">
    <text evidence="1">Catalytic component of the tRNA-splicing ligase complex.</text>
</comment>
<comment type="miscellaneous">
    <text evidence="1">Ligation probably proceeds through 3 nucleotidyl transfer steps, with 2',3'-cyclic phosphate termini being hydrolyzed to 3'-P termini in a step that precedes 3'-P activation with GMP. In the first nucleotidyl transfer step, RTCB reacts with GTP to form a covalent RTCB-histidine-GMP intermediate with release of PPi; in the second step, the GMP moiety is transferred to the RNA 3'-P; in the third step, the 5'-OH from the opposite RNA strand attacks the activated 3'-P to form a 3',5'-phosphodiester bond and release GMP.</text>
</comment>
<comment type="similarity">
    <text evidence="1">Belongs to the RtcB family.</text>
</comment>
<reference key="1">
    <citation type="journal article" date="2007" name="Proc. Natl. Acad. Sci. U.S.A.">
        <title>The tiny eukaryote Ostreococcus provides genomic insights into the paradox of plankton speciation.</title>
        <authorList>
            <person name="Palenik B."/>
            <person name="Grimwood J."/>
            <person name="Aerts A."/>
            <person name="Rouze P."/>
            <person name="Salamov A."/>
            <person name="Putnam N."/>
            <person name="Dupont C."/>
            <person name="Jorgensen R."/>
            <person name="Derelle E."/>
            <person name="Rombauts S."/>
            <person name="Zhou K."/>
            <person name="Otillar R."/>
            <person name="Merchant S.S."/>
            <person name="Podell S."/>
            <person name="Gaasterland T."/>
            <person name="Napoli C."/>
            <person name="Gendler K."/>
            <person name="Manuell A."/>
            <person name="Tai V."/>
            <person name="Vallon O."/>
            <person name="Piganeau G."/>
            <person name="Jancek S."/>
            <person name="Heijde M."/>
            <person name="Jabbari K."/>
            <person name="Bowler C."/>
            <person name="Lohr M."/>
            <person name="Robbens S."/>
            <person name="Werner G."/>
            <person name="Dubchak I."/>
            <person name="Pazour G.J."/>
            <person name="Ren Q."/>
            <person name="Paulsen I."/>
            <person name="Delwiche C."/>
            <person name="Schmutz J."/>
            <person name="Rokhsar D."/>
            <person name="Van de Peer Y."/>
            <person name="Moreau H."/>
            <person name="Grigoriev I.V."/>
        </authorList>
    </citation>
    <scope>NUCLEOTIDE SEQUENCE [LARGE SCALE GENOMIC DNA]</scope>
    <source>
        <strain>CCE9901</strain>
    </source>
</reference>
<evidence type="ECO:0000255" key="1">
    <source>
        <dbReference type="HAMAP-Rule" id="MF_03144"/>
    </source>
</evidence>
<gene>
    <name type="ORF">OSTLU_25152</name>
</gene>
<keyword id="KW-0342">GTP-binding</keyword>
<keyword id="KW-0436">Ligase</keyword>
<keyword id="KW-0464">Manganese</keyword>
<keyword id="KW-0479">Metal-binding</keyword>
<keyword id="KW-0547">Nucleotide-binding</keyword>
<keyword id="KW-1185">Reference proteome</keyword>
<keyword id="KW-0819">tRNA processing</keyword>
<dbReference type="EC" id="6.5.1.8" evidence="1"/>
<dbReference type="EMBL" id="CP000590">
    <property type="protein sequence ID" value="ABO98262.1"/>
    <property type="molecule type" value="Genomic_DNA"/>
</dbReference>
<dbReference type="RefSeq" id="XP_001419969.1">
    <property type="nucleotide sequence ID" value="XM_001419932.1"/>
</dbReference>
<dbReference type="SMR" id="A4S3S3"/>
<dbReference type="STRING" id="436017.A4S3S3"/>
<dbReference type="EnsemblPlants" id="ABO98262">
    <property type="protein sequence ID" value="ABO98262"/>
    <property type="gene ID" value="OSTLU_25152"/>
</dbReference>
<dbReference type="GeneID" id="5004154"/>
<dbReference type="Gramene" id="ABO98262">
    <property type="protein sequence ID" value="ABO98262"/>
    <property type="gene ID" value="OSTLU_25152"/>
</dbReference>
<dbReference type="KEGG" id="olu:OSTLU_25152"/>
<dbReference type="eggNOG" id="KOG3833">
    <property type="taxonomic scope" value="Eukaryota"/>
</dbReference>
<dbReference type="HOGENOM" id="CLU_022279_0_0_1"/>
<dbReference type="OMA" id="QTRGVEC"/>
<dbReference type="OrthoDB" id="10249697at2759"/>
<dbReference type="Proteomes" id="UP000001568">
    <property type="component" value="Chromosome 10"/>
</dbReference>
<dbReference type="GO" id="GO:0005634">
    <property type="term" value="C:nucleus"/>
    <property type="evidence" value="ECO:0007669"/>
    <property type="project" value="TreeGrafter"/>
</dbReference>
<dbReference type="GO" id="GO:0072669">
    <property type="term" value="C:tRNA-splicing ligase complex"/>
    <property type="evidence" value="ECO:0007669"/>
    <property type="project" value="UniProtKB-UniRule"/>
</dbReference>
<dbReference type="GO" id="GO:0005525">
    <property type="term" value="F:GTP binding"/>
    <property type="evidence" value="ECO:0007669"/>
    <property type="project" value="UniProtKB-KW"/>
</dbReference>
<dbReference type="GO" id="GO:0046872">
    <property type="term" value="F:metal ion binding"/>
    <property type="evidence" value="ECO:0007669"/>
    <property type="project" value="UniProtKB-KW"/>
</dbReference>
<dbReference type="GO" id="GO:0003972">
    <property type="term" value="F:RNA ligase (ATP) activity"/>
    <property type="evidence" value="ECO:0007669"/>
    <property type="project" value="TreeGrafter"/>
</dbReference>
<dbReference type="GO" id="GO:0170057">
    <property type="term" value="F:RNA ligase (GTP) activity"/>
    <property type="evidence" value="ECO:0007669"/>
    <property type="project" value="UniProtKB-EC"/>
</dbReference>
<dbReference type="GO" id="GO:0006388">
    <property type="term" value="P:tRNA splicing, via endonucleolytic cleavage and ligation"/>
    <property type="evidence" value="ECO:0007669"/>
    <property type="project" value="UniProtKB-UniRule"/>
</dbReference>
<dbReference type="FunFam" id="3.90.1860.10:FF:000001">
    <property type="entry name" value="tRNA-splicing ligase RtcB homolog"/>
    <property type="match status" value="1"/>
</dbReference>
<dbReference type="Gene3D" id="3.90.1860.10">
    <property type="entry name" value="tRNA-splicing ligase RtcB"/>
    <property type="match status" value="1"/>
</dbReference>
<dbReference type="HAMAP" id="MF_03144">
    <property type="entry name" value="RtcB_euk"/>
    <property type="match status" value="1"/>
</dbReference>
<dbReference type="InterPro" id="IPR001233">
    <property type="entry name" value="RtcB"/>
</dbReference>
<dbReference type="InterPro" id="IPR036025">
    <property type="entry name" value="RtcB-like_sf"/>
</dbReference>
<dbReference type="InterPro" id="IPR027513">
    <property type="entry name" value="RtcB_euk"/>
</dbReference>
<dbReference type="PANTHER" id="PTHR11118">
    <property type="entry name" value="RNA-SPLICING LIGASE RTCB HOMOLOG"/>
    <property type="match status" value="1"/>
</dbReference>
<dbReference type="PANTHER" id="PTHR11118:SF1">
    <property type="entry name" value="RNA-SPLICING LIGASE RTCB HOMOLOG"/>
    <property type="match status" value="1"/>
</dbReference>
<dbReference type="Pfam" id="PF01139">
    <property type="entry name" value="RtcB"/>
    <property type="match status" value="1"/>
</dbReference>
<dbReference type="SUPFAM" id="SSF103365">
    <property type="entry name" value="Hypothetical protein PH1602"/>
    <property type="match status" value="1"/>
</dbReference>